<organism>
    <name type="scientific">Phytophthora infestans (strain T30-4)</name>
    <name type="common">Potato late blight agent</name>
    <dbReference type="NCBI Taxonomy" id="403677"/>
    <lineage>
        <taxon>Eukaryota</taxon>
        <taxon>Sar</taxon>
        <taxon>Stramenopiles</taxon>
        <taxon>Oomycota</taxon>
        <taxon>Peronosporales</taxon>
        <taxon>Peronosporaceae</taxon>
        <taxon>Phytophthora</taxon>
    </lineage>
</organism>
<keyword id="KW-1185">Reference proteome</keyword>
<keyword id="KW-0964">Secreted</keyword>
<keyword id="KW-0732">Signal</keyword>
<keyword id="KW-0843">Virulence</keyword>
<name>CRE12_PHYIT</name>
<reference key="1">
    <citation type="journal article" date="2009" name="Nature">
        <title>Genome sequence and analysis of the Irish potato famine pathogen Phytophthora infestans.</title>
        <authorList>
            <consortium name="The Broad Institute Genome Sequencing Platform"/>
            <person name="Haas B.J."/>
            <person name="Kamoun S."/>
            <person name="Zody M.C."/>
            <person name="Jiang R.H."/>
            <person name="Handsaker R.E."/>
            <person name="Cano L.M."/>
            <person name="Grabherr M."/>
            <person name="Kodira C.D."/>
            <person name="Raffaele S."/>
            <person name="Torto-Alalibo T."/>
            <person name="Bozkurt T.O."/>
            <person name="Ah-Fong A.M."/>
            <person name="Alvarado L."/>
            <person name="Anderson V.L."/>
            <person name="Armstrong M.R."/>
            <person name="Avrova A."/>
            <person name="Baxter L."/>
            <person name="Beynon J."/>
            <person name="Boevink P.C."/>
            <person name="Bollmann S.R."/>
            <person name="Bos J.I."/>
            <person name="Bulone V."/>
            <person name="Cai G."/>
            <person name="Cakir C."/>
            <person name="Carrington J.C."/>
            <person name="Chawner M."/>
            <person name="Conti L."/>
            <person name="Costanzo S."/>
            <person name="Ewan R."/>
            <person name="Fahlgren N."/>
            <person name="Fischbach M.A."/>
            <person name="Fugelstad J."/>
            <person name="Gilroy E.M."/>
            <person name="Gnerre S."/>
            <person name="Green P.J."/>
            <person name="Grenville-Briggs L.J."/>
            <person name="Griffith J."/>
            <person name="Grunwald N.J."/>
            <person name="Horn K."/>
            <person name="Horner N.R."/>
            <person name="Hu C.H."/>
            <person name="Huitema E."/>
            <person name="Jeong D.H."/>
            <person name="Jones A.M."/>
            <person name="Jones J.D."/>
            <person name="Jones R.W."/>
            <person name="Karlsson E.K."/>
            <person name="Kunjeti S.G."/>
            <person name="Lamour K."/>
            <person name="Liu Z."/>
            <person name="Ma L."/>
            <person name="Maclean D."/>
            <person name="Chibucos M.C."/>
            <person name="McDonald H."/>
            <person name="McWalters J."/>
            <person name="Meijer H.J."/>
            <person name="Morgan W."/>
            <person name="Morris P.F."/>
            <person name="Munro C.A."/>
            <person name="O'Neill K."/>
            <person name="Ospina-Giraldo M."/>
            <person name="Pinzon A."/>
            <person name="Pritchard L."/>
            <person name="Ramsahoye B."/>
            <person name="Ren Q."/>
            <person name="Restrepo S."/>
            <person name="Roy S."/>
            <person name="Sadanandom A."/>
            <person name="Savidor A."/>
            <person name="Schornack S."/>
            <person name="Schwartz D.C."/>
            <person name="Schumann U.D."/>
            <person name="Schwessinger B."/>
            <person name="Seyer L."/>
            <person name="Sharpe T."/>
            <person name="Silvar C."/>
            <person name="Song J."/>
            <person name="Studholme D.J."/>
            <person name="Sykes S."/>
            <person name="Thines M."/>
            <person name="van de Vondervoort P.J."/>
            <person name="Phuntumart V."/>
            <person name="Wawra S."/>
            <person name="Weide R."/>
            <person name="Win J."/>
            <person name="Young C."/>
            <person name="Zhou S."/>
            <person name="Fry W."/>
            <person name="Meyers B.C."/>
            <person name="van West P."/>
            <person name="Ristaino J."/>
            <person name="Govers F."/>
            <person name="Birch P.R."/>
            <person name="Whisson S.C."/>
            <person name="Judelson H.S."/>
            <person name="Nusbaum C."/>
        </authorList>
    </citation>
    <scope>NUCLEOTIDE SEQUENCE [LARGE SCALE GENOMIC DNA]</scope>
    <source>
        <strain>T30-4</strain>
    </source>
</reference>
<reference key="2">
    <citation type="journal article" date="2017" name="Front. Plant Sci.">
        <title>Conserved RXLR effector genes of Phytophthora infestans expressed at the early stage of potato infection are suppressive to host defense.</title>
        <authorList>
            <person name="Yin J."/>
            <person name="Gu B."/>
            <person name="Huang G."/>
            <person name="Tian Y."/>
            <person name="Quan J."/>
            <person name="Lindqvist-Kreuze H."/>
            <person name="Shan W."/>
        </authorList>
    </citation>
    <scope>INDUCTION</scope>
    <scope>DOMAIN</scope>
    <scope>FUNCTION</scope>
</reference>
<proteinExistence type="evidence at transcript level"/>
<protein>
    <recommendedName>
        <fullName evidence="3">RxLR effector protein CRE12</fullName>
    </recommendedName>
    <alternativeName>
        <fullName evidence="3">Core RXLR effector 12</fullName>
    </alternativeName>
</protein>
<comment type="function">
    <text evidence="2">Effector that is involved in host plant infection. Contributes to virulence during the early infection stage, by inhibiting plant defense responses induced by both PAMP-triggered immunity (PTI) and effector-triggered immunity (ETI).</text>
</comment>
<comment type="subcellular location">
    <subcellularLocation>
        <location evidence="5">Secreted</location>
    </subcellularLocation>
    <subcellularLocation>
        <location evidence="5">Host cell</location>
    </subcellularLocation>
</comment>
<comment type="induction">
    <text evidence="2">Expression is induced during host plant infection.</text>
</comment>
<comment type="domain">
    <text evidence="5">The RxLR-dEER motif acts to carry the protein into the host cell cytoplasm through binding to cell surface phosphatidylinositol-3-phosphate.</text>
</comment>
<comment type="similarity">
    <text evidence="4">Belongs to the RxLR effector family.</text>
</comment>
<feature type="signal peptide" evidence="1">
    <location>
        <begin position="1"/>
        <end position="23"/>
    </location>
</feature>
<feature type="chain" id="PRO_5003013560" description="RxLR effector protein CRE12">
    <location>
        <begin position="24"/>
        <end position="165"/>
    </location>
</feature>
<feature type="short sequence motif" description="RxLR-dEER" evidence="5">
    <location>
        <begin position="40"/>
        <end position="59"/>
    </location>
</feature>
<gene>
    <name evidence="3" type="primary">CRE12</name>
    <name type="ORF">PITG_14960</name>
</gene>
<evidence type="ECO:0000255" key="1"/>
<evidence type="ECO:0000269" key="2">
    <source>
    </source>
</evidence>
<evidence type="ECO:0000303" key="3">
    <source>
    </source>
</evidence>
<evidence type="ECO:0000305" key="4"/>
<evidence type="ECO:0000305" key="5">
    <source>
    </source>
</evidence>
<sequence length="165" mass="18268">MRLAAFVLVAVAFAIIPDGRVSAAALGPPESSEGTHEKARLLRLNAVPQPVETGNQEERTINFASIKKIVPGTSAFKNAQALKASQKAALKAQDAAKRKAAVDKWFKQFESDEFLFTAAFPSWVRKKMHPDKVREYFASLGKSGDDVSMIVKRYDNYRQTIPTKK</sequence>
<accession>D0NPE9</accession>
<dbReference type="EMBL" id="DS028150">
    <property type="protein sequence ID" value="EEY62491.1"/>
    <property type="molecule type" value="Genomic_DNA"/>
</dbReference>
<dbReference type="RefSeq" id="XP_002899127.1">
    <property type="nucleotide sequence ID" value="XM_002899081.1"/>
</dbReference>
<dbReference type="SMR" id="D0NPE9"/>
<dbReference type="STRING" id="403677.D0NPE9"/>
<dbReference type="EnsemblProtists" id="PITG_14960T0">
    <property type="protein sequence ID" value="PITG_14960T0"/>
    <property type="gene ID" value="PITG_14960"/>
</dbReference>
<dbReference type="GeneID" id="9468133"/>
<dbReference type="KEGG" id="pif:PITG_14960"/>
<dbReference type="VEuPathDB" id="FungiDB:PITG_14960"/>
<dbReference type="eggNOG" id="ENOG502RGSR">
    <property type="taxonomic scope" value="Eukaryota"/>
</dbReference>
<dbReference type="HOGENOM" id="CLU_1655635_0_0_1"/>
<dbReference type="InParanoid" id="D0NPE9"/>
<dbReference type="OMA" id="NRCAGEG"/>
<dbReference type="Proteomes" id="UP000006643">
    <property type="component" value="Partially assembled WGS sequence"/>
</dbReference>
<dbReference type="GO" id="GO:0005576">
    <property type="term" value="C:extracellular region"/>
    <property type="evidence" value="ECO:0007669"/>
    <property type="project" value="UniProtKB-SubCell"/>
</dbReference>
<dbReference type="GO" id="GO:0043657">
    <property type="term" value="C:host cell"/>
    <property type="evidence" value="ECO:0007669"/>
    <property type="project" value="UniProtKB-SubCell"/>
</dbReference>